<sequence length="292" mass="32596">MNNHFKCIGIVGHPRHPTALTTHEMLYRWLCTKGYEVIVEQQIAHELQLKNVKTGTLAEIGQLADLAVVVGGDGNMLGATRTLARYDIKVIGINRGNLGFLTDLDPDNAQQQLADVLEGHYISEKRFLLEAQVCQQDCQKRISTAINEVVLHPGKVAHMIEFEVYIDEIFAFSQRSDGLIISTPTGSTAYSLSAGGPILTPSLDAITLVPMFPHTLSARPLVINSSSTIRLRFSHRRNDLEISCDSQIALPIQEGEDVLIRRCDYHLNLIHPKDYSYFNTLSTKLGWSKKLF</sequence>
<keyword id="KW-0067">ATP-binding</keyword>
<keyword id="KW-0963">Cytoplasm</keyword>
<keyword id="KW-0418">Kinase</keyword>
<keyword id="KW-0520">NAD</keyword>
<keyword id="KW-0521">NADP</keyword>
<keyword id="KW-0547">Nucleotide-binding</keyword>
<keyword id="KW-0808">Transferase</keyword>
<comment type="function">
    <text evidence="1">Involved in the regulation of the intracellular balance of NAD and NADP, and is a key enzyme in the biosynthesis of NADP. Catalyzes specifically the phosphorylation on 2'-hydroxyl of the adenosine moiety of NAD to yield NADP.</text>
</comment>
<comment type="catalytic activity">
    <reaction evidence="1">
        <text>NAD(+) + ATP = ADP + NADP(+) + H(+)</text>
        <dbReference type="Rhea" id="RHEA:18629"/>
        <dbReference type="ChEBI" id="CHEBI:15378"/>
        <dbReference type="ChEBI" id="CHEBI:30616"/>
        <dbReference type="ChEBI" id="CHEBI:57540"/>
        <dbReference type="ChEBI" id="CHEBI:58349"/>
        <dbReference type="ChEBI" id="CHEBI:456216"/>
        <dbReference type="EC" id="2.7.1.23"/>
    </reaction>
</comment>
<comment type="cofactor">
    <cofactor evidence="1">
        <name>a divalent metal cation</name>
        <dbReference type="ChEBI" id="CHEBI:60240"/>
    </cofactor>
</comment>
<comment type="subcellular location">
    <subcellularLocation>
        <location evidence="1">Cytoplasm</location>
    </subcellularLocation>
</comment>
<comment type="similarity">
    <text evidence="1">Belongs to the NAD kinase family.</text>
</comment>
<accession>B5Z232</accession>
<reference key="1">
    <citation type="journal article" date="2011" name="Proc. Natl. Acad. Sci. U.S.A.">
        <title>Genomic anatomy of Escherichia coli O157:H7 outbreaks.</title>
        <authorList>
            <person name="Eppinger M."/>
            <person name="Mammel M.K."/>
            <person name="Leclerc J.E."/>
            <person name="Ravel J."/>
            <person name="Cebula T.A."/>
        </authorList>
    </citation>
    <scope>NUCLEOTIDE SEQUENCE [LARGE SCALE GENOMIC DNA]</scope>
    <source>
        <strain>EC4115 / EHEC</strain>
    </source>
</reference>
<proteinExistence type="inferred from homology"/>
<evidence type="ECO:0000255" key="1">
    <source>
        <dbReference type="HAMAP-Rule" id="MF_00361"/>
    </source>
</evidence>
<organism>
    <name type="scientific">Escherichia coli O157:H7 (strain EC4115 / EHEC)</name>
    <dbReference type="NCBI Taxonomy" id="444450"/>
    <lineage>
        <taxon>Bacteria</taxon>
        <taxon>Pseudomonadati</taxon>
        <taxon>Pseudomonadota</taxon>
        <taxon>Gammaproteobacteria</taxon>
        <taxon>Enterobacterales</taxon>
        <taxon>Enterobacteriaceae</taxon>
        <taxon>Escherichia</taxon>
    </lineage>
</organism>
<feature type="chain" id="PRO_1000120853" description="NAD kinase">
    <location>
        <begin position="1"/>
        <end position="292"/>
    </location>
</feature>
<feature type="active site" description="Proton acceptor" evidence="1">
    <location>
        <position position="73"/>
    </location>
</feature>
<feature type="binding site" evidence="1">
    <location>
        <begin position="73"/>
        <end position="74"/>
    </location>
    <ligand>
        <name>NAD(+)</name>
        <dbReference type="ChEBI" id="CHEBI:57540"/>
    </ligand>
</feature>
<feature type="binding site" evidence="1">
    <location>
        <begin position="147"/>
        <end position="148"/>
    </location>
    <ligand>
        <name>NAD(+)</name>
        <dbReference type="ChEBI" id="CHEBI:57540"/>
    </ligand>
</feature>
<feature type="binding site" evidence="1">
    <location>
        <position position="158"/>
    </location>
    <ligand>
        <name>NAD(+)</name>
        <dbReference type="ChEBI" id="CHEBI:57540"/>
    </ligand>
</feature>
<feature type="binding site" evidence="1">
    <location>
        <position position="175"/>
    </location>
    <ligand>
        <name>NAD(+)</name>
        <dbReference type="ChEBI" id="CHEBI:57540"/>
    </ligand>
</feature>
<feature type="binding site" evidence="1">
    <location>
        <position position="177"/>
    </location>
    <ligand>
        <name>NAD(+)</name>
        <dbReference type="ChEBI" id="CHEBI:57540"/>
    </ligand>
</feature>
<feature type="binding site" evidence="1">
    <location>
        <begin position="188"/>
        <end position="193"/>
    </location>
    <ligand>
        <name>NAD(+)</name>
        <dbReference type="ChEBI" id="CHEBI:57540"/>
    </ligand>
</feature>
<feature type="binding site" evidence="1">
    <location>
        <position position="247"/>
    </location>
    <ligand>
        <name>NAD(+)</name>
        <dbReference type="ChEBI" id="CHEBI:57540"/>
    </ligand>
</feature>
<protein>
    <recommendedName>
        <fullName evidence="1">NAD kinase</fullName>
        <ecNumber evidence="1">2.7.1.23</ecNumber>
    </recommendedName>
    <alternativeName>
        <fullName evidence="1">ATP-dependent NAD kinase</fullName>
    </alternativeName>
</protein>
<name>NADK_ECO5E</name>
<gene>
    <name evidence="1" type="primary">nadK</name>
    <name type="ordered locus">ECH74115_3855</name>
</gene>
<dbReference type="EC" id="2.7.1.23" evidence="1"/>
<dbReference type="EMBL" id="CP001164">
    <property type="protein sequence ID" value="ACI38439.1"/>
    <property type="molecule type" value="Genomic_DNA"/>
</dbReference>
<dbReference type="RefSeq" id="WP_001059175.1">
    <property type="nucleotide sequence ID" value="NC_011353.1"/>
</dbReference>
<dbReference type="SMR" id="B5Z232"/>
<dbReference type="KEGG" id="ecf:ECH74115_3855"/>
<dbReference type="HOGENOM" id="CLU_008831_0_1_6"/>
<dbReference type="GO" id="GO:0005737">
    <property type="term" value="C:cytoplasm"/>
    <property type="evidence" value="ECO:0007669"/>
    <property type="project" value="UniProtKB-SubCell"/>
</dbReference>
<dbReference type="GO" id="GO:0005524">
    <property type="term" value="F:ATP binding"/>
    <property type="evidence" value="ECO:0007669"/>
    <property type="project" value="UniProtKB-KW"/>
</dbReference>
<dbReference type="GO" id="GO:0046872">
    <property type="term" value="F:metal ion binding"/>
    <property type="evidence" value="ECO:0007669"/>
    <property type="project" value="UniProtKB-UniRule"/>
</dbReference>
<dbReference type="GO" id="GO:0051287">
    <property type="term" value="F:NAD binding"/>
    <property type="evidence" value="ECO:0007669"/>
    <property type="project" value="UniProtKB-ARBA"/>
</dbReference>
<dbReference type="GO" id="GO:0003951">
    <property type="term" value="F:NAD+ kinase activity"/>
    <property type="evidence" value="ECO:0007669"/>
    <property type="project" value="UniProtKB-UniRule"/>
</dbReference>
<dbReference type="GO" id="GO:0019674">
    <property type="term" value="P:NAD metabolic process"/>
    <property type="evidence" value="ECO:0007669"/>
    <property type="project" value="InterPro"/>
</dbReference>
<dbReference type="GO" id="GO:0006741">
    <property type="term" value="P:NADP biosynthetic process"/>
    <property type="evidence" value="ECO:0007669"/>
    <property type="project" value="UniProtKB-UniRule"/>
</dbReference>
<dbReference type="FunFam" id="2.60.200.30:FF:000001">
    <property type="entry name" value="NAD kinase"/>
    <property type="match status" value="1"/>
</dbReference>
<dbReference type="FunFam" id="3.40.50.10330:FF:000004">
    <property type="entry name" value="NAD kinase"/>
    <property type="match status" value="1"/>
</dbReference>
<dbReference type="Gene3D" id="3.40.50.10330">
    <property type="entry name" value="Probable inorganic polyphosphate/atp-NAD kinase, domain 1"/>
    <property type="match status" value="1"/>
</dbReference>
<dbReference type="Gene3D" id="2.60.200.30">
    <property type="entry name" value="Probable inorganic polyphosphate/atp-NAD kinase, domain 2"/>
    <property type="match status" value="1"/>
</dbReference>
<dbReference type="HAMAP" id="MF_00361">
    <property type="entry name" value="NAD_kinase"/>
    <property type="match status" value="1"/>
</dbReference>
<dbReference type="InterPro" id="IPR017438">
    <property type="entry name" value="ATP-NAD_kinase_N"/>
</dbReference>
<dbReference type="InterPro" id="IPR017437">
    <property type="entry name" value="ATP-NAD_kinase_PpnK-typ_C"/>
</dbReference>
<dbReference type="InterPro" id="IPR016064">
    <property type="entry name" value="NAD/diacylglycerol_kinase_sf"/>
</dbReference>
<dbReference type="InterPro" id="IPR002504">
    <property type="entry name" value="NADK"/>
</dbReference>
<dbReference type="NCBIfam" id="NF002306">
    <property type="entry name" value="PRK01231.1"/>
    <property type="match status" value="1"/>
</dbReference>
<dbReference type="NCBIfam" id="NF002893">
    <property type="entry name" value="PRK03378.1"/>
    <property type="match status" value="1"/>
</dbReference>
<dbReference type="PANTHER" id="PTHR20275">
    <property type="entry name" value="NAD KINASE"/>
    <property type="match status" value="1"/>
</dbReference>
<dbReference type="PANTHER" id="PTHR20275:SF0">
    <property type="entry name" value="NAD KINASE"/>
    <property type="match status" value="1"/>
</dbReference>
<dbReference type="Pfam" id="PF01513">
    <property type="entry name" value="NAD_kinase"/>
    <property type="match status" value="1"/>
</dbReference>
<dbReference type="Pfam" id="PF20143">
    <property type="entry name" value="NAD_kinase_C"/>
    <property type="match status" value="1"/>
</dbReference>
<dbReference type="SUPFAM" id="SSF111331">
    <property type="entry name" value="NAD kinase/diacylglycerol kinase-like"/>
    <property type="match status" value="1"/>
</dbReference>